<keyword id="KW-0030">Aminoacyl-tRNA synthetase</keyword>
<keyword id="KW-0067">ATP-binding</keyword>
<keyword id="KW-0150">Chloroplast</keyword>
<keyword id="KW-0436">Ligase</keyword>
<keyword id="KW-0460">Magnesium</keyword>
<keyword id="KW-0479">Metal-binding</keyword>
<keyword id="KW-0547">Nucleotide-binding</keyword>
<keyword id="KW-0934">Plastid</keyword>
<keyword id="KW-0648">Protein biosynthesis</keyword>
<feature type="chain" id="PRO_0000232833" description="Phenylalanine--tRNA ligase beta subunit, chloroplastic">
    <location>
        <begin position="1"/>
        <end position="697"/>
    </location>
</feature>
<feature type="domain" description="B5" evidence="1">
    <location>
        <begin position="283"/>
        <end position="368"/>
    </location>
</feature>
<feature type="domain" description="FDX-ACB" evidence="1">
    <location>
        <begin position="609"/>
        <end position="697"/>
    </location>
</feature>
<feature type="binding site" evidence="1">
    <location>
        <position position="346"/>
    </location>
    <ligand>
        <name>Mg(2+)</name>
        <dbReference type="ChEBI" id="CHEBI:18420"/>
        <note>shared with alpha subunit</note>
    </ligand>
</feature>
<feature type="binding site" evidence="1">
    <location>
        <position position="352"/>
    </location>
    <ligand>
        <name>Mg(2+)</name>
        <dbReference type="ChEBI" id="CHEBI:18420"/>
        <note>shared with alpha subunit</note>
    </ligand>
</feature>
<feature type="binding site" evidence="1">
    <location>
        <position position="355"/>
    </location>
    <ligand>
        <name>Mg(2+)</name>
        <dbReference type="ChEBI" id="CHEBI:18420"/>
        <note>shared with alpha subunit</note>
    </ligand>
</feature>
<feature type="binding site" evidence="1">
    <location>
        <position position="356"/>
    </location>
    <ligand>
        <name>Mg(2+)</name>
        <dbReference type="ChEBI" id="CHEBI:18420"/>
        <note>shared with alpha subunit</note>
    </ligand>
</feature>
<proteinExistence type="inferred from homology"/>
<sequence length="697" mass="81429">MKFSLRWLQQIVDLNNIKFSTLVDKLSVSGFEVEDISRNSSNDDMIFDVTTTANRQDILCTVGLAREISSIFNRDLKYKLYKDSIAISTHCLNILNSVSLLDLSIVNVNYFYNNRSPLWLQYYLSSYNIKSLNLLTDIPQYIYLKWGQSIEIFDKNKISSVPIQYSLFNLQKKSHIIYDSPNIELEVLRYDDVILFPIGFSLNENIKCDAATNSIVIMGYVCDKQYITDIKKKLKLSTYLSQRCCNQGSRSDFLNAFYESVYLLGSFGFATLGKFYGYHKLYNISRILFIDKVKIQNILGSVKIGSYNYLTVKEIFTLLERLNFLPIYDSLKSSFKIHIPVYRQDDIVRPIDVIEEVARIYGFDNFISKLPLNPIDNKNIFLNNIFANKVYRIRYLLRCLGLHEAQNYSFYDYYPFNHDTQIKIYNPLAQDQSFLRSSLAVHLTLNQQDNLRQGNKDIEVFEIGKVFRLYSSSLEYDNTLNSFEFLHLSGLIANSIFLRPSWSDKEQSLSWFHAKGMVEEFLDRLEVPVVWKKISDLDQSNLFFNLMHLLNMNWTAIICNRFHEEIGIFGKLCNKSDFNSTYVFEFDLVKLIASIESLNHINSIINPYSSYPSLTRDISLTVKNSCTISFIKARILSYENNLIESIEVFNYYKDKSINAFYNVGLRIVYRAHNRTLNYSDINRIDQEIDDLLNEYKL</sequence>
<reference key="1">
    <citation type="journal article" date="2004" name="J. Mol. Evol.">
        <title>Comparative analysis of the complete plastid genome sequence of the red alga Gracilaria tenuistipitata var. liui provides insights into the evolution of rhodoplasts and their relationship to other plastids.</title>
        <authorList>
            <person name="Hagopian J.C."/>
            <person name="Reis M."/>
            <person name="Kitajima J.P."/>
            <person name="Bhattacharya D."/>
            <person name="de Oliveira M.C."/>
        </authorList>
    </citation>
    <scope>NUCLEOTIDE SEQUENCE [LARGE SCALE GENOMIC DNA]</scope>
</reference>
<evidence type="ECO:0000255" key="1">
    <source>
        <dbReference type="HAMAP-Rule" id="MF_00283"/>
    </source>
</evidence>
<name>SYFB_GRATL</name>
<geneLocation type="chloroplast"/>
<organism>
    <name type="scientific">Gracilaria tenuistipitata var. liui</name>
    <name type="common">Red alga</name>
    <dbReference type="NCBI Taxonomy" id="285951"/>
    <lineage>
        <taxon>Eukaryota</taxon>
        <taxon>Rhodophyta</taxon>
        <taxon>Florideophyceae</taxon>
        <taxon>Rhodymeniophycidae</taxon>
        <taxon>Gracilariales</taxon>
        <taxon>Gracilariaceae</taxon>
        <taxon>Gracilaria</taxon>
        <taxon>Gracilaria tenuistipitata</taxon>
    </lineage>
</organism>
<comment type="catalytic activity">
    <reaction evidence="1">
        <text>tRNA(Phe) + L-phenylalanine + ATP = L-phenylalanyl-tRNA(Phe) + AMP + diphosphate + H(+)</text>
        <dbReference type="Rhea" id="RHEA:19413"/>
        <dbReference type="Rhea" id="RHEA-COMP:9668"/>
        <dbReference type="Rhea" id="RHEA-COMP:9699"/>
        <dbReference type="ChEBI" id="CHEBI:15378"/>
        <dbReference type="ChEBI" id="CHEBI:30616"/>
        <dbReference type="ChEBI" id="CHEBI:33019"/>
        <dbReference type="ChEBI" id="CHEBI:58095"/>
        <dbReference type="ChEBI" id="CHEBI:78442"/>
        <dbReference type="ChEBI" id="CHEBI:78531"/>
        <dbReference type="ChEBI" id="CHEBI:456215"/>
        <dbReference type="EC" id="6.1.1.20"/>
    </reaction>
</comment>
<comment type="cofactor">
    <cofactor evidence="1">
        <name>Mg(2+)</name>
        <dbReference type="ChEBI" id="CHEBI:18420"/>
    </cofactor>
    <text evidence="1">Binds 2 magnesium ions per tetramer.</text>
</comment>
<comment type="subunit">
    <text evidence="1">Tetramer of two alpha and two beta subunits.</text>
</comment>
<comment type="subcellular location">
    <subcellularLocation>
        <location>Plastid</location>
        <location>Chloroplast</location>
    </subcellularLocation>
</comment>
<comment type="similarity">
    <text evidence="1">Belongs to the phenylalanyl-tRNA synthetase beta subunit family. Type 1 subfamily.</text>
</comment>
<protein>
    <recommendedName>
        <fullName evidence="1">Phenylalanine--tRNA ligase beta subunit, chloroplastic</fullName>
        <ecNumber evidence="1">6.1.1.20</ecNumber>
    </recommendedName>
    <alternativeName>
        <fullName evidence="1">Phenylalanyl-tRNA synthetase beta subunit</fullName>
        <shortName evidence="1">PheRS</shortName>
    </alternativeName>
</protein>
<dbReference type="EC" id="6.1.1.20" evidence="1"/>
<dbReference type="EMBL" id="AY673996">
    <property type="protein sequence ID" value="AAT79637.1"/>
    <property type="molecule type" value="Genomic_DNA"/>
</dbReference>
<dbReference type="RefSeq" id="YP_063562.1">
    <property type="nucleotide sequence ID" value="NC_006137.1"/>
</dbReference>
<dbReference type="SMR" id="Q6B8Z8"/>
<dbReference type="GeneID" id="2944047"/>
<dbReference type="GO" id="GO:0009507">
    <property type="term" value="C:chloroplast"/>
    <property type="evidence" value="ECO:0007669"/>
    <property type="project" value="UniProtKB-SubCell"/>
</dbReference>
<dbReference type="GO" id="GO:0009328">
    <property type="term" value="C:phenylalanine-tRNA ligase complex"/>
    <property type="evidence" value="ECO:0007669"/>
    <property type="project" value="TreeGrafter"/>
</dbReference>
<dbReference type="GO" id="GO:0005524">
    <property type="term" value="F:ATP binding"/>
    <property type="evidence" value="ECO:0007669"/>
    <property type="project" value="UniProtKB-UniRule"/>
</dbReference>
<dbReference type="GO" id="GO:0000287">
    <property type="term" value="F:magnesium ion binding"/>
    <property type="evidence" value="ECO:0007669"/>
    <property type="project" value="UniProtKB-UniRule"/>
</dbReference>
<dbReference type="GO" id="GO:0004826">
    <property type="term" value="F:phenylalanine-tRNA ligase activity"/>
    <property type="evidence" value="ECO:0007669"/>
    <property type="project" value="UniProtKB-UniRule"/>
</dbReference>
<dbReference type="GO" id="GO:0003723">
    <property type="term" value="F:RNA binding"/>
    <property type="evidence" value="ECO:0007669"/>
    <property type="project" value="InterPro"/>
</dbReference>
<dbReference type="GO" id="GO:0006432">
    <property type="term" value="P:phenylalanyl-tRNA aminoacylation"/>
    <property type="evidence" value="ECO:0007669"/>
    <property type="project" value="UniProtKB-UniRule"/>
</dbReference>
<dbReference type="Gene3D" id="3.30.56.10">
    <property type="match status" value="2"/>
</dbReference>
<dbReference type="Gene3D" id="3.30.930.10">
    <property type="entry name" value="Bira Bifunctional Protein, Domain 2"/>
    <property type="match status" value="1"/>
</dbReference>
<dbReference type="Gene3D" id="3.30.70.380">
    <property type="entry name" value="Ferrodoxin-fold anticodon-binding domain"/>
    <property type="match status" value="1"/>
</dbReference>
<dbReference type="Gene3D" id="3.50.40.10">
    <property type="entry name" value="Phenylalanyl-trna Synthetase, Chain B, domain 3"/>
    <property type="match status" value="1"/>
</dbReference>
<dbReference type="HAMAP" id="MF_00283">
    <property type="entry name" value="Phe_tRNA_synth_beta1"/>
    <property type="match status" value="1"/>
</dbReference>
<dbReference type="InterPro" id="IPR045864">
    <property type="entry name" value="aa-tRNA-synth_II/BPL/LPL"/>
</dbReference>
<dbReference type="InterPro" id="IPR005146">
    <property type="entry name" value="B3/B4_tRNA-bd"/>
</dbReference>
<dbReference type="InterPro" id="IPR009061">
    <property type="entry name" value="DNA-bd_dom_put_sf"/>
</dbReference>
<dbReference type="InterPro" id="IPR005121">
    <property type="entry name" value="Fdx_antiC-bd"/>
</dbReference>
<dbReference type="InterPro" id="IPR036690">
    <property type="entry name" value="Fdx_antiC-bd_sf"/>
</dbReference>
<dbReference type="InterPro" id="IPR045060">
    <property type="entry name" value="Phe-tRNA-ligase_IIc_bsu"/>
</dbReference>
<dbReference type="InterPro" id="IPR004532">
    <property type="entry name" value="Phe-tRNA-ligase_IIc_bsu_bact"/>
</dbReference>
<dbReference type="InterPro" id="IPR020825">
    <property type="entry name" value="Phe-tRNA_synthase-like_B3/B4"/>
</dbReference>
<dbReference type="InterPro" id="IPR041616">
    <property type="entry name" value="PheRS_beta_core"/>
</dbReference>
<dbReference type="InterPro" id="IPR005147">
    <property type="entry name" value="tRNA_synthase_B5-dom"/>
</dbReference>
<dbReference type="PANTHER" id="PTHR10947:SF0">
    <property type="entry name" value="PHENYLALANINE--TRNA LIGASE BETA SUBUNIT"/>
    <property type="match status" value="1"/>
</dbReference>
<dbReference type="PANTHER" id="PTHR10947">
    <property type="entry name" value="PHENYLALANYL-TRNA SYNTHETASE BETA CHAIN AND LEUCINE-RICH REPEAT-CONTAINING PROTEIN 47"/>
    <property type="match status" value="1"/>
</dbReference>
<dbReference type="Pfam" id="PF03483">
    <property type="entry name" value="B3_4"/>
    <property type="match status" value="1"/>
</dbReference>
<dbReference type="Pfam" id="PF03484">
    <property type="entry name" value="B5"/>
    <property type="match status" value="1"/>
</dbReference>
<dbReference type="Pfam" id="PF03147">
    <property type="entry name" value="FDX-ACB"/>
    <property type="match status" value="1"/>
</dbReference>
<dbReference type="Pfam" id="PF17759">
    <property type="entry name" value="tRNA_synthFbeta"/>
    <property type="match status" value="1"/>
</dbReference>
<dbReference type="SMART" id="SM00874">
    <property type="entry name" value="B5"/>
    <property type="match status" value="1"/>
</dbReference>
<dbReference type="SMART" id="SM00896">
    <property type="entry name" value="FDX-ACB"/>
    <property type="match status" value="1"/>
</dbReference>
<dbReference type="SUPFAM" id="SSF54991">
    <property type="entry name" value="Anticodon-binding domain of PheRS"/>
    <property type="match status" value="1"/>
</dbReference>
<dbReference type="SUPFAM" id="SSF55681">
    <property type="entry name" value="Class II aaRS and biotin synthetases"/>
    <property type="match status" value="1"/>
</dbReference>
<dbReference type="SUPFAM" id="SSF56037">
    <property type="entry name" value="PheT/TilS domain"/>
    <property type="match status" value="1"/>
</dbReference>
<dbReference type="SUPFAM" id="SSF46955">
    <property type="entry name" value="Putative DNA-binding domain"/>
    <property type="match status" value="2"/>
</dbReference>
<dbReference type="PROSITE" id="PS51483">
    <property type="entry name" value="B5"/>
    <property type="match status" value="1"/>
</dbReference>
<dbReference type="PROSITE" id="PS51447">
    <property type="entry name" value="FDX_ACB"/>
    <property type="match status" value="1"/>
</dbReference>
<accession>Q6B8Z8</accession>
<gene>
    <name evidence="1" type="primary">pheT</name>
    <name type="synonym">syfB</name>
    <name type="ordered locus">Grc000056</name>
</gene>